<reference key="1">
    <citation type="journal article" date="2007" name="Gene">
        <title>Mapping of chimpanzee full-length cDNAs onto the human genome unveils large potential divergence of the transcriptome.</title>
        <authorList>
            <person name="Sakate R."/>
            <person name="Suto Y."/>
            <person name="Imanishi T."/>
            <person name="Tanoue T."/>
            <person name="Hida M."/>
            <person name="Hayasaka I."/>
            <person name="Kusuda J."/>
            <person name="Gojobori T."/>
            <person name="Hashimoto K."/>
            <person name="Hirai M."/>
        </authorList>
    </citation>
    <scope>NUCLEOTIDE SEQUENCE [MRNA]</scope>
    <source>
        <tissue>Brain</tissue>
    </source>
</reference>
<gene>
    <name type="primary">RAP1B</name>
</gene>
<dbReference type="EC" id="3.6.5.2" evidence="2"/>
<dbReference type="EMBL" id="AB222125">
    <property type="protein sequence ID" value="BAF62370.1"/>
    <property type="molecule type" value="mRNA"/>
</dbReference>
<dbReference type="RefSeq" id="NP_001092015.1">
    <property type="nucleotide sequence ID" value="NM_001098545.1"/>
</dbReference>
<dbReference type="RefSeq" id="XP_009424050.1">
    <property type="nucleotide sequence ID" value="XM_009425775.4"/>
</dbReference>
<dbReference type="RefSeq" id="XP_016778071.1">
    <property type="nucleotide sequence ID" value="XM_016922582.1"/>
</dbReference>
<dbReference type="SMR" id="A5A6J7"/>
<dbReference type="FunCoup" id="A5A6J7">
    <property type="interactions" value="3103"/>
</dbReference>
<dbReference type="STRING" id="9598.ENSPTRP00000070769"/>
<dbReference type="PaxDb" id="9598-ENSPTRP00000008828"/>
<dbReference type="Ensembl" id="ENSPTRT00000110714.1">
    <property type="protein sequence ID" value="ENSPTRP00000070769.1"/>
    <property type="gene ID" value="ENSPTRG00000005197.4"/>
</dbReference>
<dbReference type="GeneID" id="452065"/>
<dbReference type="KEGG" id="ptr:452065"/>
<dbReference type="CTD" id="5908"/>
<dbReference type="VGNC" id="VGNC:10515">
    <property type="gene designation" value="RAP1B"/>
</dbReference>
<dbReference type="eggNOG" id="KOG0395">
    <property type="taxonomic scope" value="Eukaryota"/>
</dbReference>
<dbReference type="GeneTree" id="ENSGT00940000154429"/>
<dbReference type="HOGENOM" id="CLU_041217_9_8_1"/>
<dbReference type="InParanoid" id="A5A6J7"/>
<dbReference type="OMA" id="MPLREFK"/>
<dbReference type="OrthoDB" id="7125at9604"/>
<dbReference type="TreeFam" id="TF313014"/>
<dbReference type="Proteomes" id="UP000002277">
    <property type="component" value="Chromosome 12"/>
</dbReference>
<dbReference type="Bgee" id="ENSPTRG00000005197">
    <property type="expression patterns" value="Expressed in fibroblast and 21 other cell types or tissues"/>
</dbReference>
<dbReference type="GO" id="GO:0005911">
    <property type="term" value="C:cell-cell junction"/>
    <property type="evidence" value="ECO:0000250"/>
    <property type="project" value="UniProtKB"/>
</dbReference>
<dbReference type="GO" id="GO:0005829">
    <property type="term" value="C:cytosol"/>
    <property type="evidence" value="ECO:0007669"/>
    <property type="project" value="UniProtKB-SubCell"/>
</dbReference>
<dbReference type="GO" id="GO:0005811">
    <property type="term" value="C:lipid droplet"/>
    <property type="evidence" value="ECO:0007669"/>
    <property type="project" value="Ensembl"/>
</dbReference>
<dbReference type="GO" id="GO:0005886">
    <property type="term" value="C:plasma membrane"/>
    <property type="evidence" value="ECO:0000318"/>
    <property type="project" value="GO_Central"/>
</dbReference>
<dbReference type="GO" id="GO:0003925">
    <property type="term" value="F:G protein activity"/>
    <property type="evidence" value="ECO:0007669"/>
    <property type="project" value="UniProtKB-EC"/>
</dbReference>
<dbReference type="GO" id="GO:0019003">
    <property type="term" value="F:GDP binding"/>
    <property type="evidence" value="ECO:0000250"/>
    <property type="project" value="UniProtKB"/>
</dbReference>
<dbReference type="GO" id="GO:0005525">
    <property type="term" value="F:GTP binding"/>
    <property type="evidence" value="ECO:0000250"/>
    <property type="project" value="UniProtKB"/>
</dbReference>
<dbReference type="GO" id="GO:0003924">
    <property type="term" value="F:GTPase activity"/>
    <property type="evidence" value="ECO:0000250"/>
    <property type="project" value="UniProtKB"/>
</dbReference>
<dbReference type="GO" id="GO:0044877">
    <property type="term" value="F:protein-containing complex binding"/>
    <property type="evidence" value="ECO:0007669"/>
    <property type="project" value="Ensembl"/>
</dbReference>
<dbReference type="GO" id="GO:0071320">
    <property type="term" value="P:cellular response to cAMP"/>
    <property type="evidence" value="ECO:0000250"/>
    <property type="project" value="UniProtKB"/>
</dbReference>
<dbReference type="GO" id="GO:0061028">
    <property type="term" value="P:establishment of endothelial barrier"/>
    <property type="evidence" value="ECO:0000250"/>
    <property type="project" value="UniProtKB"/>
</dbReference>
<dbReference type="GO" id="GO:2000301">
    <property type="term" value="P:negative regulation of synaptic vesicle exocytosis"/>
    <property type="evidence" value="ECO:0000318"/>
    <property type="project" value="GO_Central"/>
</dbReference>
<dbReference type="GO" id="GO:0033625">
    <property type="term" value="P:positive regulation of integrin activation"/>
    <property type="evidence" value="ECO:0007669"/>
    <property type="project" value="Ensembl"/>
</dbReference>
<dbReference type="GO" id="GO:0032486">
    <property type="term" value="P:Rap protein signal transduction"/>
    <property type="evidence" value="ECO:0000250"/>
    <property type="project" value="UniProtKB"/>
</dbReference>
<dbReference type="GO" id="GO:1901888">
    <property type="term" value="P:regulation of cell junction assembly"/>
    <property type="evidence" value="ECO:0000250"/>
    <property type="project" value="UniProtKB"/>
</dbReference>
<dbReference type="GO" id="GO:2000114">
    <property type="term" value="P:regulation of establishment of cell polarity"/>
    <property type="evidence" value="ECO:0000250"/>
    <property type="project" value="UniProtKB"/>
</dbReference>
<dbReference type="CDD" id="cd04175">
    <property type="entry name" value="Rap1"/>
    <property type="match status" value="1"/>
</dbReference>
<dbReference type="FunFam" id="3.40.50.300:FF:000182">
    <property type="entry name" value="ras-related protein Rap-1b"/>
    <property type="match status" value="1"/>
</dbReference>
<dbReference type="Gene3D" id="3.40.50.300">
    <property type="entry name" value="P-loop containing nucleotide triphosphate hydrolases"/>
    <property type="match status" value="1"/>
</dbReference>
<dbReference type="InterPro" id="IPR027417">
    <property type="entry name" value="P-loop_NTPase"/>
</dbReference>
<dbReference type="InterPro" id="IPR038851">
    <property type="entry name" value="Rap1"/>
</dbReference>
<dbReference type="InterPro" id="IPR005225">
    <property type="entry name" value="Small_GTP-bd"/>
</dbReference>
<dbReference type="InterPro" id="IPR001806">
    <property type="entry name" value="Small_GTPase"/>
</dbReference>
<dbReference type="InterPro" id="IPR020849">
    <property type="entry name" value="Small_GTPase_Ras-type"/>
</dbReference>
<dbReference type="NCBIfam" id="TIGR00231">
    <property type="entry name" value="small_GTP"/>
    <property type="match status" value="1"/>
</dbReference>
<dbReference type="PANTHER" id="PTHR24070">
    <property type="entry name" value="RAS, DI-RAS, AND RHEB FAMILY MEMBERS OF SMALL GTPASE SUPERFAMILY"/>
    <property type="match status" value="1"/>
</dbReference>
<dbReference type="Pfam" id="PF00071">
    <property type="entry name" value="Ras"/>
    <property type="match status" value="1"/>
</dbReference>
<dbReference type="PRINTS" id="PR00449">
    <property type="entry name" value="RASTRNSFRMNG"/>
</dbReference>
<dbReference type="SMART" id="SM00175">
    <property type="entry name" value="RAB"/>
    <property type="match status" value="1"/>
</dbReference>
<dbReference type="SMART" id="SM00176">
    <property type="entry name" value="RAN"/>
    <property type="match status" value="1"/>
</dbReference>
<dbReference type="SMART" id="SM00173">
    <property type="entry name" value="RAS"/>
    <property type="match status" value="1"/>
</dbReference>
<dbReference type="SMART" id="SM00174">
    <property type="entry name" value="RHO"/>
    <property type="match status" value="1"/>
</dbReference>
<dbReference type="SUPFAM" id="SSF52540">
    <property type="entry name" value="P-loop containing nucleoside triphosphate hydrolases"/>
    <property type="match status" value="1"/>
</dbReference>
<dbReference type="PROSITE" id="PS51421">
    <property type="entry name" value="RAS"/>
    <property type="match status" value="1"/>
</dbReference>
<proteinExistence type="evidence at transcript level"/>
<organism>
    <name type="scientific">Pan troglodytes</name>
    <name type="common">Chimpanzee</name>
    <dbReference type="NCBI Taxonomy" id="9598"/>
    <lineage>
        <taxon>Eukaryota</taxon>
        <taxon>Metazoa</taxon>
        <taxon>Chordata</taxon>
        <taxon>Craniata</taxon>
        <taxon>Vertebrata</taxon>
        <taxon>Euteleostomi</taxon>
        <taxon>Mammalia</taxon>
        <taxon>Eutheria</taxon>
        <taxon>Euarchontoglires</taxon>
        <taxon>Primates</taxon>
        <taxon>Haplorrhini</taxon>
        <taxon>Catarrhini</taxon>
        <taxon>Hominidae</taxon>
        <taxon>Pan</taxon>
    </lineage>
</organism>
<keyword id="KW-0013">ADP-ribosylation</keyword>
<keyword id="KW-0965">Cell junction</keyword>
<keyword id="KW-1003">Cell membrane</keyword>
<keyword id="KW-0963">Cytoplasm</keyword>
<keyword id="KW-0342">GTP-binding</keyword>
<keyword id="KW-0378">Hydrolase</keyword>
<keyword id="KW-0449">Lipoprotein</keyword>
<keyword id="KW-0472">Membrane</keyword>
<keyword id="KW-0488">Methylation</keyword>
<keyword id="KW-0547">Nucleotide-binding</keyword>
<keyword id="KW-0597">Phosphoprotein</keyword>
<keyword id="KW-0636">Prenylation</keyword>
<keyword id="KW-1185">Reference proteome</keyword>
<comment type="function">
    <text evidence="2">GTP-binding protein that possesses intrinsic GTPase activity. Contributes to the polarizing activity of KRIT1 and CDH5 in the establishment and maintenance of correct endothelial cell polarity and vascular lumen. Required for the localization of phosphorylated PRKCZ, PARD3 and TIAM1 to the cell junction. Plays a role in the establishment of basal endothelial barrier function (By similarity).</text>
</comment>
<comment type="catalytic activity">
    <reaction evidence="2">
        <text>GTP + H2O = GDP + phosphate + H(+)</text>
        <dbReference type="Rhea" id="RHEA:19669"/>
        <dbReference type="ChEBI" id="CHEBI:15377"/>
        <dbReference type="ChEBI" id="CHEBI:15378"/>
        <dbReference type="ChEBI" id="CHEBI:37565"/>
        <dbReference type="ChEBI" id="CHEBI:43474"/>
        <dbReference type="ChEBI" id="CHEBI:58189"/>
        <dbReference type="EC" id="3.6.5.2"/>
    </reaction>
</comment>
<comment type="activity regulation">
    <text evidence="2">Activated by guanine nucleotide-exchange factor (GEF) EPAC2 in a cAMP-dependent manner.</text>
</comment>
<comment type="subunit">
    <text evidence="2">Heterodimer with RAP1GAP (By similarity). Interacts with EPAC2 (By similarity). Interacts with SGSM1 (By similarity). Interacts with SGSM2 (By similarity). Interacts with SGSM3 (By similarity). Interacts with KRIT1 (By similarity). Interacts with RAP1GDS1 (By similarity).</text>
</comment>
<comment type="subcellular location">
    <subcellularLocation>
        <location evidence="2">Cell membrane</location>
    </subcellularLocation>
    <subcellularLocation>
        <location evidence="2">Cytoplasm</location>
        <location evidence="2">Cytosol</location>
    </subcellularLocation>
    <subcellularLocation>
        <location evidence="2">Cell junction</location>
    </subcellularLocation>
    <text evidence="2">May shuttle between plasma membrane and cytosol (By similarity). Presence of KRIT1 and CDH5 is required for its localization to the cell junction (By similarity).</text>
</comment>
<evidence type="ECO:0000250" key="1"/>
<evidence type="ECO:0000250" key="2">
    <source>
        <dbReference type="UniProtKB" id="P61224"/>
    </source>
</evidence>
<evidence type="ECO:0000305" key="3"/>
<protein>
    <recommendedName>
        <fullName>Ras-related protein Rap-1b</fullName>
        <ecNumber evidence="2">3.6.5.2</ecNumber>
    </recommendedName>
</protein>
<feature type="chain" id="PRO_0000295277" description="Ras-related protein Rap-1b">
    <location>
        <begin position="1"/>
        <end position="181"/>
    </location>
</feature>
<feature type="propeptide" id="PRO_0000295278" description="Removed in mature form" evidence="1">
    <location>
        <begin position="182"/>
        <end position="184"/>
    </location>
</feature>
<feature type="region of interest" description="Interaction with KRIT1" evidence="2">
    <location>
        <begin position="25"/>
        <end position="67"/>
    </location>
</feature>
<feature type="short sequence motif" description="Effector region" evidence="3">
    <location>
        <begin position="32"/>
        <end position="40"/>
    </location>
</feature>
<feature type="binding site" evidence="2">
    <location>
        <begin position="10"/>
        <end position="18"/>
    </location>
    <ligand>
        <name>GTP</name>
        <dbReference type="ChEBI" id="CHEBI:37565"/>
    </ligand>
</feature>
<feature type="binding site" evidence="2">
    <location>
        <begin position="57"/>
        <end position="61"/>
    </location>
    <ligand>
        <name>GTP</name>
        <dbReference type="ChEBI" id="CHEBI:37565"/>
    </ligand>
</feature>
<feature type="binding site" evidence="2">
    <location>
        <begin position="116"/>
        <end position="119"/>
    </location>
    <ligand>
        <name>GTP</name>
        <dbReference type="ChEBI" id="CHEBI:37565"/>
    </ligand>
</feature>
<feature type="binding site" evidence="2">
    <location>
        <begin position="147"/>
        <end position="149"/>
    </location>
    <ligand>
        <name>GTP</name>
        <dbReference type="ChEBI" id="CHEBI:37565"/>
    </ligand>
</feature>
<feature type="modified residue" description="ADP-ribosylserine; by botulinum toxin" evidence="1">
    <location>
        <position position="39"/>
    </location>
</feature>
<feature type="modified residue" description="Phosphoserine; by PKA" evidence="2">
    <location>
        <position position="179"/>
    </location>
</feature>
<feature type="modified residue" description="Cysteine methyl ester" evidence="2">
    <location>
        <position position="181"/>
    </location>
</feature>
<feature type="lipid moiety-binding region" description="S-geranylgeranyl cysteine" evidence="2">
    <location>
        <position position="181"/>
    </location>
</feature>
<accession>A5A6J7</accession>
<name>RAP1B_PANTR</name>
<sequence>MREYKLVVLGSGGVGKSALTVQFVQGIFVEKYDPTIEDSYRKQVEVDAQQCMLEILDTAGTEQFTAMRDLYMKNGQGFALVYSITAQSTFNDLQDLREQILRVKDTDDVPMILVGNKCDLEDERVVGKEQGQNLARQWNNCAFLESSAKSKINVNEIFYDLVRQINRKTPVPGKARKKSSCQLL</sequence>